<keyword id="KW-0050">Antiport</keyword>
<keyword id="KW-0997">Cell inner membrane</keyword>
<keyword id="KW-1003">Cell membrane</keyword>
<keyword id="KW-0406">Ion transport</keyword>
<keyword id="KW-0472">Membrane</keyword>
<keyword id="KW-0915">Sodium</keyword>
<keyword id="KW-0739">Sodium transport</keyword>
<keyword id="KW-0812">Transmembrane</keyword>
<keyword id="KW-1133">Transmembrane helix</keyword>
<keyword id="KW-0813">Transport</keyword>
<accession>B1LHY1</accession>
<name>NHAB_ECOSM</name>
<reference key="1">
    <citation type="journal article" date="2008" name="J. Bacteriol.">
        <title>Insights into the environmental resistance gene pool from the genome sequence of the multidrug-resistant environmental isolate Escherichia coli SMS-3-5.</title>
        <authorList>
            <person name="Fricke W.F."/>
            <person name="Wright M.S."/>
            <person name="Lindell A.H."/>
            <person name="Harkins D.M."/>
            <person name="Baker-Austin C."/>
            <person name="Ravel J."/>
            <person name="Stepanauskas R."/>
        </authorList>
    </citation>
    <scope>NUCLEOTIDE SEQUENCE [LARGE SCALE GENOMIC DNA]</scope>
    <source>
        <strain>SMS-3-5 / SECEC</strain>
    </source>
</reference>
<comment type="function">
    <text evidence="1">Na(+)/H(+) antiporter that extrudes sodium in exchange for external protons.</text>
</comment>
<comment type="catalytic activity">
    <reaction evidence="1">
        <text>2 Na(+)(in) + 3 H(+)(out) = 2 Na(+)(out) + 3 H(+)(in)</text>
        <dbReference type="Rhea" id="RHEA:29247"/>
        <dbReference type="ChEBI" id="CHEBI:15378"/>
        <dbReference type="ChEBI" id="CHEBI:29101"/>
    </reaction>
    <physiologicalReaction direction="left-to-right" evidence="1">
        <dbReference type="Rhea" id="RHEA:29248"/>
    </physiologicalReaction>
</comment>
<comment type="subcellular location">
    <subcellularLocation>
        <location evidence="1">Cell inner membrane</location>
        <topology evidence="1">Multi-pass membrane protein</topology>
    </subcellularLocation>
</comment>
<comment type="similarity">
    <text evidence="1">Belongs to the NhaB Na(+)/H(+) (TC 2.A.34) antiporter family.</text>
</comment>
<gene>
    <name evidence="1" type="primary">nhaB</name>
    <name type="ordered locus">EcSMS35_1963</name>
</gene>
<feature type="chain" id="PRO_1000148039" description="Na(+)/H(+) antiporter NhaB">
    <location>
        <begin position="1"/>
        <end position="513"/>
    </location>
</feature>
<feature type="transmembrane region" description="Helical" evidence="1">
    <location>
        <begin position="23"/>
        <end position="43"/>
    </location>
</feature>
<feature type="transmembrane region" description="Helical" evidence="1">
    <location>
        <begin position="52"/>
        <end position="72"/>
    </location>
</feature>
<feature type="transmembrane region" description="Helical" evidence="1">
    <location>
        <begin position="97"/>
        <end position="117"/>
    </location>
</feature>
<feature type="transmembrane region" description="Helical" evidence="1">
    <location>
        <begin position="144"/>
        <end position="164"/>
    </location>
</feature>
<feature type="transmembrane region" description="Helical" evidence="1">
    <location>
        <begin position="202"/>
        <end position="222"/>
    </location>
</feature>
<feature type="transmembrane region" description="Helical" evidence="1">
    <location>
        <begin position="238"/>
        <end position="258"/>
    </location>
</feature>
<feature type="transmembrane region" description="Helical" evidence="1">
    <location>
        <begin position="303"/>
        <end position="323"/>
    </location>
</feature>
<feature type="transmembrane region" description="Helical" evidence="1">
    <location>
        <begin position="348"/>
        <end position="368"/>
    </location>
</feature>
<feature type="transmembrane region" description="Helical" evidence="1">
    <location>
        <begin position="391"/>
        <end position="411"/>
    </location>
</feature>
<feature type="transmembrane region" description="Helical" evidence="1">
    <location>
        <begin position="447"/>
        <end position="467"/>
    </location>
</feature>
<feature type="transmembrane region" description="Helical" evidence="1">
    <location>
        <begin position="475"/>
        <end position="495"/>
    </location>
</feature>
<dbReference type="EMBL" id="CP000970">
    <property type="protein sequence ID" value="ACB16366.1"/>
    <property type="molecule type" value="Genomic_DNA"/>
</dbReference>
<dbReference type="RefSeq" id="WP_000406366.1">
    <property type="nucleotide sequence ID" value="NC_010498.1"/>
</dbReference>
<dbReference type="SMR" id="B1LHY1"/>
<dbReference type="KEGG" id="ecm:EcSMS35_1963"/>
<dbReference type="HOGENOM" id="CLU_041110_0_0_6"/>
<dbReference type="Proteomes" id="UP000007011">
    <property type="component" value="Chromosome"/>
</dbReference>
<dbReference type="GO" id="GO:0005886">
    <property type="term" value="C:plasma membrane"/>
    <property type="evidence" value="ECO:0007669"/>
    <property type="project" value="UniProtKB-SubCell"/>
</dbReference>
<dbReference type="GO" id="GO:0015385">
    <property type="term" value="F:sodium:proton antiporter activity"/>
    <property type="evidence" value="ECO:0007669"/>
    <property type="project" value="InterPro"/>
</dbReference>
<dbReference type="HAMAP" id="MF_01599">
    <property type="entry name" value="NhaB"/>
    <property type="match status" value="1"/>
</dbReference>
<dbReference type="InterPro" id="IPR004671">
    <property type="entry name" value="Na+/H+_antiporter_NhaB"/>
</dbReference>
<dbReference type="NCBIfam" id="TIGR00774">
    <property type="entry name" value="NhaB"/>
    <property type="match status" value="1"/>
</dbReference>
<dbReference type="NCBIfam" id="NF007093">
    <property type="entry name" value="PRK09547.1"/>
    <property type="match status" value="1"/>
</dbReference>
<dbReference type="PANTHER" id="PTHR43302:SF1">
    <property type="entry name" value="NA(+)_H(+) ANTIPORTER NHAB"/>
    <property type="match status" value="1"/>
</dbReference>
<dbReference type="PANTHER" id="PTHR43302">
    <property type="entry name" value="TRANSPORTER ARSB-RELATED"/>
    <property type="match status" value="1"/>
</dbReference>
<dbReference type="Pfam" id="PF06450">
    <property type="entry name" value="NhaB"/>
    <property type="match status" value="1"/>
</dbReference>
<evidence type="ECO:0000255" key="1">
    <source>
        <dbReference type="HAMAP-Rule" id="MF_01599"/>
    </source>
</evidence>
<proteinExistence type="inferred from homology"/>
<sequence length="513" mass="56700">MEISWGRALWRNFLGQSPDWYKLALIIFLILNPLIFIISPFVAGWLLVAEFIFTLAMALKCYPLLPGGLLAIEAVFIGMTSAEHVREEVAANLEVLLLLMFMVAGIYFMKQLLLFIFTRLLLSIRSKMLLSLSFCMAAAFLSAFLDALTVVAVVISVAVGFYGIYHRVASSRTEDTDLQDDSHIDKHYKVVLEQFRGFLRSLMMHAGVGTALGGVMTMVGEPQNLIIAKAAGWHFGDFFLRMSPVTVPVLICGLLTCLLVEKLRCFGYGETLPEKVREVLQQFDDQSRHQRTRQDKIRLIVQAIIGVWLVTALALHLAEVGLIGLSVIILATSLTGVTDEHAIGKAFTESLPFTALLTVFFSVVAVIIDQQLFSPIIHFVLQASEHAQLSLFYIFNGLLSSISDNVFVGTIYINEAKAAMESGAITLKQYELLAVAINTGTNLPSVATPNGQAAFLFLLTSALAPLIRLSYGRMVWMALPYTLVLTLVGLLCVEFTLAPVTEWFMQMGWIATL</sequence>
<organism>
    <name type="scientific">Escherichia coli (strain SMS-3-5 / SECEC)</name>
    <dbReference type="NCBI Taxonomy" id="439855"/>
    <lineage>
        <taxon>Bacteria</taxon>
        <taxon>Pseudomonadati</taxon>
        <taxon>Pseudomonadota</taxon>
        <taxon>Gammaproteobacteria</taxon>
        <taxon>Enterobacterales</taxon>
        <taxon>Enterobacteriaceae</taxon>
        <taxon>Escherichia</taxon>
    </lineage>
</organism>
<protein>
    <recommendedName>
        <fullName evidence="1">Na(+)/H(+) antiporter NhaB</fullName>
    </recommendedName>
    <alternativeName>
        <fullName evidence="1">Sodium/proton antiporter NhaB</fullName>
    </alternativeName>
</protein>